<proteinExistence type="inferred from homology"/>
<evidence type="ECO:0000255" key="1">
    <source>
        <dbReference type="HAMAP-Rule" id="MF_00012"/>
    </source>
</evidence>
<feature type="chain" id="PRO_0000225380" description="Dihydroxy-acid dehydratase 2">
    <location>
        <begin position="1"/>
        <end position="557"/>
    </location>
</feature>
<feature type="active site" description="Proton acceptor" evidence="1">
    <location>
        <position position="473"/>
    </location>
</feature>
<feature type="binding site" evidence="1">
    <location>
        <position position="50"/>
    </location>
    <ligand>
        <name>[2Fe-2S] cluster</name>
        <dbReference type="ChEBI" id="CHEBI:190135"/>
    </ligand>
</feature>
<feature type="binding site" evidence="1">
    <location>
        <position position="82"/>
    </location>
    <ligand>
        <name>Mg(2+)</name>
        <dbReference type="ChEBI" id="CHEBI:18420"/>
    </ligand>
</feature>
<feature type="binding site" evidence="1">
    <location>
        <position position="123"/>
    </location>
    <ligand>
        <name>[2Fe-2S] cluster</name>
        <dbReference type="ChEBI" id="CHEBI:190135"/>
    </ligand>
</feature>
<feature type="binding site" evidence="1">
    <location>
        <position position="124"/>
    </location>
    <ligand>
        <name>Mg(2+)</name>
        <dbReference type="ChEBI" id="CHEBI:18420"/>
    </ligand>
</feature>
<feature type="binding site" description="via carbamate group" evidence="1">
    <location>
        <position position="125"/>
    </location>
    <ligand>
        <name>Mg(2+)</name>
        <dbReference type="ChEBI" id="CHEBI:18420"/>
    </ligand>
</feature>
<feature type="binding site" evidence="1">
    <location>
        <position position="195"/>
    </location>
    <ligand>
        <name>[2Fe-2S] cluster</name>
        <dbReference type="ChEBI" id="CHEBI:190135"/>
    </ligand>
</feature>
<feature type="binding site" evidence="1">
    <location>
        <position position="447"/>
    </location>
    <ligand>
        <name>Mg(2+)</name>
        <dbReference type="ChEBI" id="CHEBI:18420"/>
    </ligand>
</feature>
<feature type="modified residue" description="N6-carboxylysine" evidence="1">
    <location>
        <position position="125"/>
    </location>
</feature>
<keyword id="KW-0001">2Fe-2S</keyword>
<keyword id="KW-0028">Amino-acid biosynthesis</keyword>
<keyword id="KW-0100">Branched-chain amino acid biosynthesis</keyword>
<keyword id="KW-0408">Iron</keyword>
<keyword id="KW-0411">Iron-sulfur</keyword>
<keyword id="KW-0456">Lyase</keyword>
<keyword id="KW-0460">Magnesium</keyword>
<keyword id="KW-0479">Metal-binding</keyword>
<reference key="1">
    <citation type="submission" date="2005-10" db="EMBL/GenBank/DDBJ databases">
        <title>Complete sequence of chromosome 1 of Burkholderia sp. 383.</title>
        <authorList>
            <consortium name="US DOE Joint Genome Institute"/>
            <person name="Copeland A."/>
            <person name="Lucas S."/>
            <person name="Lapidus A."/>
            <person name="Barry K."/>
            <person name="Detter J.C."/>
            <person name="Glavina T."/>
            <person name="Hammon N."/>
            <person name="Israni S."/>
            <person name="Pitluck S."/>
            <person name="Chain P."/>
            <person name="Malfatti S."/>
            <person name="Shin M."/>
            <person name="Vergez L."/>
            <person name="Schmutz J."/>
            <person name="Larimer F."/>
            <person name="Land M."/>
            <person name="Kyrpides N."/>
            <person name="Lykidis A."/>
            <person name="Richardson P."/>
        </authorList>
    </citation>
    <scope>NUCLEOTIDE SEQUENCE [LARGE SCALE GENOMIC DNA]</scope>
    <source>
        <strain>ATCC 17760 / DSM 23089 / LMG 22485 / NCIMB 9086 / R18194 / 383</strain>
    </source>
</reference>
<protein>
    <recommendedName>
        <fullName evidence="1">Dihydroxy-acid dehydratase 2</fullName>
        <shortName evidence="1">DAD 2</shortName>
        <ecNumber evidence="1">4.2.1.9</ecNumber>
    </recommendedName>
</protein>
<dbReference type="EC" id="4.2.1.9" evidence="1"/>
<dbReference type="EMBL" id="CP000151">
    <property type="protein sequence ID" value="ABB09387.1"/>
    <property type="molecule type" value="Genomic_DNA"/>
</dbReference>
<dbReference type="RefSeq" id="WP_011352911.1">
    <property type="nucleotide sequence ID" value="NC_007510.1"/>
</dbReference>
<dbReference type="SMR" id="Q39DS9"/>
<dbReference type="GeneID" id="45095677"/>
<dbReference type="KEGG" id="bur:Bcep18194_A5793"/>
<dbReference type="PATRIC" id="fig|482957.22.peg.2777"/>
<dbReference type="HOGENOM" id="CLU_014271_4_2_4"/>
<dbReference type="UniPathway" id="UPA00047">
    <property type="reaction ID" value="UER00057"/>
</dbReference>
<dbReference type="UniPathway" id="UPA00049">
    <property type="reaction ID" value="UER00061"/>
</dbReference>
<dbReference type="Proteomes" id="UP000002705">
    <property type="component" value="Chromosome 1"/>
</dbReference>
<dbReference type="GO" id="GO:0051537">
    <property type="term" value="F:2 iron, 2 sulfur cluster binding"/>
    <property type="evidence" value="ECO:0007669"/>
    <property type="project" value="UniProtKB-UniRule"/>
</dbReference>
<dbReference type="GO" id="GO:0004160">
    <property type="term" value="F:dihydroxy-acid dehydratase activity"/>
    <property type="evidence" value="ECO:0007669"/>
    <property type="project" value="UniProtKB-UniRule"/>
</dbReference>
<dbReference type="GO" id="GO:0000287">
    <property type="term" value="F:magnesium ion binding"/>
    <property type="evidence" value="ECO:0007669"/>
    <property type="project" value="UniProtKB-UniRule"/>
</dbReference>
<dbReference type="GO" id="GO:0009097">
    <property type="term" value="P:isoleucine biosynthetic process"/>
    <property type="evidence" value="ECO:0007669"/>
    <property type="project" value="UniProtKB-UniRule"/>
</dbReference>
<dbReference type="GO" id="GO:0009099">
    <property type="term" value="P:L-valine biosynthetic process"/>
    <property type="evidence" value="ECO:0007669"/>
    <property type="project" value="UniProtKB-UniRule"/>
</dbReference>
<dbReference type="FunFam" id="3.50.30.80:FF:000001">
    <property type="entry name" value="Dihydroxy-acid dehydratase"/>
    <property type="match status" value="1"/>
</dbReference>
<dbReference type="Gene3D" id="3.50.30.80">
    <property type="entry name" value="IlvD/EDD C-terminal domain-like"/>
    <property type="match status" value="1"/>
</dbReference>
<dbReference type="HAMAP" id="MF_00012">
    <property type="entry name" value="IlvD"/>
    <property type="match status" value="1"/>
</dbReference>
<dbReference type="InterPro" id="IPR050165">
    <property type="entry name" value="DHAD_IlvD/Edd"/>
</dbReference>
<dbReference type="InterPro" id="IPR042096">
    <property type="entry name" value="Dihydro-acid_dehy_C"/>
</dbReference>
<dbReference type="InterPro" id="IPR004404">
    <property type="entry name" value="DihydroxyA_deHydtase"/>
</dbReference>
<dbReference type="InterPro" id="IPR020558">
    <property type="entry name" value="DiOHA_6PGluconate_deHydtase_CS"/>
</dbReference>
<dbReference type="InterPro" id="IPR056740">
    <property type="entry name" value="ILV_EDD_C"/>
</dbReference>
<dbReference type="InterPro" id="IPR000581">
    <property type="entry name" value="ILV_EDD_N"/>
</dbReference>
<dbReference type="InterPro" id="IPR037237">
    <property type="entry name" value="IlvD/EDD_N"/>
</dbReference>
<dbReference type="NCBIfam" id="TIGR00110">
    <property type="entry name" value="ilvD"/>
    <property type="match status" value="1"/>
</dbReference>
<dbReference type="NCBIfam" id="NF002068">
    <property type="entry name" value="PRK00911.1"/>
    <property type="match status" value="1"/>
</dbReference>
<dbReference type="PANTHER" id="PTHR21000">
    <property type="entry name" value="DIHYDROXY-ACID DEHYDRATASE DAD"/>
    <property type="match status" value="1"/>
</dbReference>
<dbReference type="PANTHER" id="PTHR21000:SF5">
    <property type="entry name" value="DIHYDROXY-ACID DEHYDRATASE, MITOCHONDRIAL"/>
    <property type="match status" value="1"/>
</dbReference>
<dbReference type="Pfam" id="PF24877">
    <property type="entry name" value="ILV_EDD_C"/>
    <property type="match status" value="1"/>
</dbReference>
<dbReference type="Pfam" id="PF00920">
    <property type="entry name" value="ILVD_EDD_N"/>
    <property type="match status" value="1"/>
</dbReference>
<dbReference type="SUPFAM" id="SSF143975">
    <property type="entry name" value="IlvD/EDD N-terminal domain-like"/>
    <property type="match status" value="1"/>
</dbReference>
<dbReference type="SUPFAM" id="SSF52016">
    <property type="entry name" value="LeuD/IlvD-like"/>
    <property type="match status" value="1"/>
</dbReference>
<dbReference type="PROSITE" id="PS00886">
    <property type="entry name" value="ILVD_EDD_1"/>
    <property type="match status" value="1"/>
</dbReference>
<dbReference type="PROSITE" id="PS00887">
    <property type="entry name" value="ILVD_EDD_2"/>
    <property type="match status" value="1"/>
</dbReference>
<accession>Q39DS9</accession>
<gene>
    <name evidence="1" type="primary">ilvD2</name>
    <name type="ordered locus">Bcep18194_A5793</name>
</gene>
<comment type="function">
    <text evidence="1">Functions in the biosynthesis of branched-chain amino acids. Catalyzes the dehydration of (2R,3R)-2,3-dihydroxy-3-methylpentanoate (2,3-dihydroxy-3-methylvalerate) into 2-oxo-3-methylpentanoate (2-oxo-3-methylvalerate) and of (2R)-2,3-dihydroxy-3-methylbutanoate (2,3-dihydroxyisovalerate) into 2-oxo-3-methylbutanoate (2-oxoisovalerate), the penultimate precursor to L-isoleucine and L-valine, respectively.</text>
</comment>
<comment type="catalytic activity">
    <reaction evidence="1">
        <text>(2R)-2,3-dihydroxy-3-methylbutanoate = 3-methyl-2-oxobutanoate + H2O</text>
        <dbReference type="Rhea" id="RHEA:24809"/>
        <dbReference type="ChEBI" id="CHEBI:11851"/>
        <dbReference type="ChEBI" id="CHEBI:15377"/>
        <dbReference type="ChEBI" id="CHEBI:49072"/>
        <dbReference type="EC" id="4.2.1.9"/>
    </reaction>
    <physiologicalReaction direction="left-to-right" evidence="1">
        <dbReference type="Rhea" id="RHEA:24810"/>
    </physiologicalReaction>
</comment>
<comment type="catalytic activity">
    <reaction evidence="1">
        <text>(2R,3R)-2,3-dihydroxy-3-methylpentanoate = (S)-3-methyl-2-oxopentanoate + H2O</text>
        <dbReference type="Rhea" id="RHEA:27694"/>
        <dbReference type="ChEBI" id="CHEBI:15377"/>
        <dbReference type="ChEBI" id="CHEBI:35146"/>
        <dbReference type="ChEBI" id="CHEBI:49258"/>
        <dbReference type="EC" id="4.2.1.9"/>
    </reaction>
    <physiologicalReaction direction="left-to-right" evidence="1">
        <dbReference type="Rhea" id="RHEA:27695"/>
    </physiologicalReaction>
</comment>
<comment type="cofactor">
    <cofactor evidence="1">
        <name>[2Fe-2S] cluster</name>
        <dbReference type="ChEBI" id="CHEBI:190135"/>
    </cofactor>
    <text evidence="1">Binds 1 [2Fe-2S] cluster per subunit. This cluster acts as a Lewis acid cofactor.</text>
</comment>
<comment type="cofactor">
    <cofactor evidence="1">
        <name>Mg(2+)</name>
        <dbReference type="ChEBI" id="CHEBI:18420"/>
    </cofactor>
</comment>
<comment type="pathway">
    <text evidence="1">Amino-acid biosynthesis; L-isoleucine biosynthesis; L-isoleucine from 2-oxobutanoate: step 3/4.</text>
</comment>
<comment type="pathway">
    <text evidence="1">Amino-acid biosynthesis; L-valine biosynthesis; L-valine from pyruvate: step 3/4.</text>
</comment>
<comment type="subunit">
    <text evidence="1">Homodimer.</text>
</comment>
<comment type="similarity">
    <text evidence="1">Belongs to the IlvD/Edd family.</text>
</comment>
<sequence length="557" mass="59243">MAYNRRSKHITQGVARSPNRSMYYALGYQKDDFDKPMVGIANGHSTITPCNSGLQRLSDAAVAAVKAADANPQIFGTPTISDGMSMGTEGMKYSLVSREVIADCIETCVQGQWMDGVVVVGGCDKNMPGGMIALARLNVPGIYVYGGTIRPGNWKGRDLTIVSSFEAVGEFTAGRMSQEDFEGVERNACPTSGSCGGMYTANTMSSSFEALGMSLLYSSTMANPDQEKVDSAAESARVLVEAVKRDLKPRDIITKESIENAVSVIMATGGSTNAVLHYLAIAHAAEVDWTIEDFERIRKRVPVICDLKPSGKYVATDLHRAGGIPQVLKILLDAGLLHGDCMTITGRTIADELKDVPSVPRADQDVIFPIDRALYKEGHLAILKGNLAEDGAVAKITGLKNPVITGPARVFDDEQSAMDAILGDRIRAGDILVLRYLGPKGGPGMPEMLAPTSAIIGKGLGESVGFITDGRFSGGTWGMVVGHVAPEAFVGGTIALVQEGDSITIDAHRLLLQLNVDDAELARRRAAWQQPAPRYTRGVLAKFAALARPANQGAVTG</sequence>
<name>ILVD2_BURL3</name>
<organism>
    <name type="scientific">Burkholderia lata (strain ATCC 17760 / DSM 23089 / LMG 22485 / NCIMB 9086 / R18194 / 383)</name>
    <dbReference type="NCBI Taxonomy" id="482957"/>
    <lineage>
        <taxon>Bacteria</taxon>
        <taxon>Pseudomonadati</taxon>
        <taxon>Pseudomonadota</taxon>
        <taxon>Betaproteobacteria</taxon>
        <taxon>Burkholderiales</taxon>
        <taxon>Burkholderiaceae</taxon>
        <taxon>Burkholderia</taxon>
        <taxon>Burkholderia cepacia complex</taxon>
    </lineage>
</organism>